<accession>P18474</accession>
<accession>Q83857</accession>
<evidence type="ECO:0000250" key="1"/>
<evidence type="ECO:0000269" key="2">
    <source>
    </source>
</evidence>
<evidence type="ECO:0000269" key="3">
    <source>
    </source>
</evidence>
<evidence type="ECO:0000269" key="4">
    <source>
    </source>
</evidence>
<evidence type="ECO:0000269" key="5">
    <source>
    </source>
</evidence>
<evidence type="ECO:0000305" key="6"/>
<evidence type="ECO:0007829" key="7">
    <source>
        <dbReference type="PDB" id="2Y26"/>
    </source>
</evidence>
<evidence type="ECO:0007829" key="8">
    <source>
        <dbReference type="PDB" id="5FOJ"/>
    </source>
</evidence>
<organismHost>
    <name type="scientific">Vitis rupestris</name>
    <dbReference type="NCBI Taxonomy" id="103352"/>
</organismHost>
<organismHost>
    <name type="scientific">Vitis vinifera</name>
    <name type="common">Grape</name>
    <dbReference type="NCBI Taxonomy" id="29760"/>
</organismHost>
<dbReference type="EMBL" id="X16907">
    <property type="protein sequence ID" value="CAA34779.1"/>
    <property type="molecule type" value="Genomic_RNA"/>
</dbReference>
<dbReference type="EMBL" id="X16907">
    <property type="protein sequence ID" value="CAA34780.1"/>
    <property type="molecule type" value="Genomic_RNA"/>
</dbReference>
<dbReference type="RefSeq" id="NP_619706.1">
    <property type="nucleotide sequence ID" value="NC_003623.1"/>
</dbReference>
<dbReference type="RefSeq" id="NP_619707.1">
    <property type="nucleotide sequence ID" value="NC_003623.1"/>
</dbReference>
<dbReference type="PDB" id="2Y26">
    <property type="method" value="X-ray"/>
    <property type="resolution" value="2.70 A"/>
    <property type="chains" value="A/B/C/D/E/F/G/H/I/J/K/L/M/N/O/P/Q/R/S/T=606-1109"/>
</dbReference>
<dbReference type="PDB" id="4V5T">
    <property type="method" value="X-ray"/>
    <property type="resolution" value="3.00 A"/>
    <property type="chains" value="AA/AB/AC/AD/AE/AF/AG/AH/AI/AJ/AK/AL/AM/AN/AO/AP/AQ/AR/AS/AT/BA/BB/BC/BD/BE/BF/BG/BH/BI/BJ/BK/BL/BM/BN/BO/BP/BQ/BR/BS/BT/CA/CB/CC/CD/CE/CF/CG/CH/CI/CJ/CK/CL/CM/CN/CO/CP/CQ/CR/CS/CT=606-1109"/>
</dbReference>
<dbReference type="PDB" id="4V5W">
    <property type="method" value="X-ray"/>
    <property type="resolution" value="3.70 A"/>
    <property type="chains" value="AA/AB/AC/AD/AE/AF/AG/AH/AI/AJ/AK/AL/AM/AN/AO/AP/AQ/AR/AS/AT/BA/BB/BC/BD/BE/BF/BG/BH/BI/BJ/BK/BL/BM/BN/BO/BP/BQ/BR/BS/BT/CA/CB/CC/CD/CE/CF/CG/CH/CI/CJ/CK/CL/CM/CN/CO/CP/CQ/CR/CS/CT=606-1109"/>
</dbReference>
<dbReference type="PDB" id="5FOJ">
    <property type="method" value="EM"/>
    <property type="resolution" value="2.80 A"/>
    <property type="chains" value="B=606-1109"/>
</dbReference>
<dbReference type="PDBsum" id="2Y26"/>
<dbReference type="PDBsum" id="4V5T"/>
<dbReference type="PDBsum" id="4V5W"/>
<dbReference type="PDBsum" id="5FOJ"/>
<dbReference type="SMR" id="P18474"/>
<dbReference type="ABCD" id="P18474">
    <property type="antibodies" value="1 sequenced antibody"/>
</dbReference>
<dbReference type="GeneID" id="1494094"/>
<dbReference type="KEGG" id="vg:1494094"/>
<dbReference type="OrthoDB" id="29407at10239"/>
<dbReference type="EvolutionaryTrace" id="P18474"/>
<dbReference type="Proteomes" id="UP000009160">
    <property type="component" value="Genome"/>
</dbReference>
<dbReference type="GO" id="GO:0030430">
    <property type="term" value="C:host cell cytoplasm"/>
    <property type="evidence" value="ECO:0007669"/>
    <property type="project" value="UniProtKB-SubCell"/>
</dbReference>
<dbReference type="GO" id="GO:0042025">
    <property type="term" value="C:host cell nucleus"/>
    <property type="evidence" value="ECO:0007669"/>
    <property type="project" value="UniProtKB-SubCell"/>
</dbReference>
<dbReference type="GO" id="GO:0044219">
    <property type="term" value="C:host cell plasmodesma"/>
    <property type="evidence" value="ECO:0007669"/>
    <property type="project" value="UniProtKB-SubCell"/>
</dbReference>
<dbReference type="GO" id="GO:0019028">
    <property type="term" value="C:viral capsid"/>
    <property type="evidence" value="ECO:0007669"/>
    <property type="project" value="UniProtKB-KW"/>
</dbReference>
<dbReference type="GO" id="GO:0005198">
    <property type="term" value="F:structural molecule activity"/>
    <property type="evidence" value="ECO:0007669"/>
    <property type="project" value="InterPro"/>
</dbReference>
<dbReference type="GO" id="GO:0046740">
    <property type="term" value="P:transport of virus in host, cell to cell"/>
    <property type="evidence" value="ECO:0007669"/>
    <property type="project" value="UniProtKB-KW"/>
</dbReference>
<dbReference type="Gene3D" id="2.60.120.20">
    <property type="match status" value="2"/>
</dbReference>
<dbReference type="InterPro" id="IPR005054">
    <property type="entry name" value="Nepo_coat"/>
</dbReference>
<dbReference type="InterPro" id="IPR005305">
    <property type="entry name" value="Nepo_coat_C"/>
</dbReference>
<dbReference type="InterPro" id="IPR005306">
    <property type="entry name" value="Nepo_coat_N"/>
</dbReference>
<dbReference type="InterPro" id="IPR021081">
    <property type="entry name" value="Nepovirus_subgr_A_2A"/>
</dbReference>
<dbReference type="InterPro" id="IPR029053">
    <property type="entry name" value="Viral_coat"/>
</dbReference>
<dbReference type="Pfam" id="PF12312">
    <property type="entry name" value="NeA_P2"/>
    <property type="match status" value="1"/>
</dbReference>
<dbReference type="Pfam" id="PF03391">
    <property type="entry name" value="Nepo_coat"/>
    <property type="match status" value="1"/>
</dbReference>
<dbReference type="Pfam" id="PF03688">
    <property type="entry name" value="Nepo_coat_C"/>
    <property type="match status" value="1"/>
</dbReference>
<dbReference type="Pfam" id="PF03689">
    <property type="entry name" value="Nepo_coat_N"/>
    <property type="match status" value="1"/>
</dbReference>
<dbReference type="SUPFAM" id="SSF88633">
    <property type="entry name" value="Positive stranded ssRNA viruses"/>
    <property type="match status" value="3"/>
</dbReference>
<comment type="function">
    <molecule>Protein 2A</molecule>
    <text>Implicated in RNA2 replication. Could also be required for nematode transmission of the virus.</text>
</comment>
<comment type="function">
    <molecule>Movement protein</molecule>
    <text>Transports viral genome to neighboring plant cells directly through plasmosdesmata, without any budding. The movement protein allows efficient cell to cell propagation, by bypassing the host cell wall barrier. Acts by forming a tubular structure at the host plasmodesmata, enlarging it enough to allow free passage of virion capsids.</text>
</comment>
<comment type="subcellular location">
    <subcellularLocation>
        <location evidence="2 3">Host cell junction</location>
        <location evidence="2 3">Host plasmodesma</location>
    </subcellularLocation>
    <text evidence="1">Assembles in tubules that are embedded within modified plasmodesmata (By similarity). Movement proteins are targeted preferentially to calreticulin-labeled foci within the youngest cross walls, where they assemble into tubules. During cell division, they colocalize in the cell plate with KNOLLE, a cytokinesis-specific syntaxin.</text>
</comment>
<comment type="subcellular location">
    <molecule>Protein 2A</molecule>
    <subcellularLocation>
        <location>Host cytoplasm</location>
    </subcellularLocation>
    <subcellularLocation>
        <location>Host nucleus</location>
    </subcellularLocation>
    <text>Cytoplasmic early in infection. Later in infection, it becomes progressively concentrated around the nucleus, where it forms large aggregates.</text>
</comment>
<comment type="subcellular location">
    <molecule>Coat protein</molecule>
    <subcellularLocation>
        <location evidence="6">Virion</location>
    </subcellularLocation>
</comment>
<comment type="PTM">
    <text evidence="4 5">Specific enzymatic cleavages in vivo by the P1 encoded 3C-like protease yield mature proteins.</text>
</comment>
<comment type="miscellaneous">
    <text>Virions are comprised of 60 copies of the coat protein.</text>
</comment>
<comment type="similarity">
    <text evidence="6">Belongs to the nepoviruses RNA2 polyprotein family.</text>
</comment>
<feature type="chain" id="PRO_0000037100" description="Protein 2A">
    <location>
        <begin position="1"/>
        <end position="257"/>
    </location>
</feature>
<feature type="chain" id="PRO_0000037101" description="Movement protein">
    <location>
        <begin position="258"/>
        <end position="605"/>
    </location>
</feature>
<feature type="chain" id="PRO_0000037102" description="Coat protein">
    <location>
        <begin position="606"/>
        <end position="1109"/>
    </location>
</feature>
<feature type="strand" evidence="7">
    <location>
        <begin position="607"/>
        <end position="615"/>
    </location>
</feature>
<feature type="strand" evidence="7">
    <location>
        <begin position="624"/>
        <end position="629"/>
    </location>
</feature>
<feature type="helix" evidence="7">
    <location>
        <begin position="630"/>
        <end position="637"/>
    </location>
</feature>
<feature type="helix" evidence="7">
    <location>
        <begin position="640"/>
        <end position="648"/>
    </location>
</feature>
<feature type="strand" evidence="7">
    <location>
        <begin position="649"/>
        <end position="651"/>
    </location>
</feature>
<feature type="strand" evidence="7">
    <location>
        <begin position="654"/>
        <end position="660"/>
    </location>
</feature>
<feature type="strand" evidence="7">
    <location>
        <begin position="665"/>
        <end position="667"/>
    </location>
</feature>
<feature type="strand" evidence="7">
    <location>
        <begin position="670"/>
        <end position="676"/>
    </location>
</feature>
<feature type="helix" evidence="7">
    <location>
        <begin position="682"/>
        <end position="685"/>
    </location>
</feature>
<feature type="helix" evidence="7">
    <location>
        <begin position="691"/>
        <end position="694"/>
    </location>
</feature>
<feature type="strand" evidence="7">
    <location>
        <begin position="696"/>
        <end position="703"/>
    </location>
</feature>
<feature type="helix" evidence="7">
    <location>
        <begin position="704"/>
        <end position="706"/>
    </location>
</feature>
<feature type="strand" evidence="7">
    <location>
        <begin position="708"/>
        <end position="714"/>
    </location>
</feature>
<feature type="helix" evidence="7">
    <location>
        <begin position="715"/>
        <end position="718"/>
    </location>
</feature>
<feature type="strand" evidence="8">
    <location>
        <begin position="725"/>
        <end position="727"/>
    </location>
</feature>
<feature type="strand" evidence="7">
    <location>
        <begin position="729"/>
        <end position="731"/>
    </location>
</feature>
<feature type="strand" evidence="7">
    <location>
        <begin position="734"/>
        <end position="741"/>
    </location>
</feature>
<feature type="strand" evidence="7">
    <location>
        <begin position="751"/>
        <end position="758"/>
    </location>
</feature>
<feature type="strand" evidence="7">
    <location>
        <begin position="772"/>
        <end position="774"/>
    </location>
</feature>
<feature type="strand" evidence="7">
    <location>
        <begin position="792"/>
        <end position="794"/>
    </location>
</feature>
<feature type="strand" evidence="7">
    <location>
        <begin position="799"/>
        <end position="806"/>
    </location>
</feature>
<feature type="strand" evidence="7">
    <location>
        <begin position="818"/>
        <end position="822"/>
    </location>
</feature>
<feature type="helix" evidence="7">
    <location>
        <begin position="823"/>
        <end position="828"/>
    </location>
</feature>
<feature type="strand" evidence="7">
    <location>
        <begin position="831"/>
        <end position="844"/>
    </location>
</feature>
<feature type="strand" evidence="7">
    <location>
        <begin position="851"/>
        <end position="862"/>
    </location>
</feature>
<feature type="helix" evidence="7">
    <location>
        <begin position="867"/>
        <end position="870"/>
    </location>
</feature>
<feature type="strand" evidence="7">
    <location>
        <begin position="876"/>
        <end position="878"/>
    </location>
</feature>
<feature type="strand" evidence="7">
    <location>
        <begin position="880"/>
        <end position="887"/>
    </location>
</feature>
<feature type="strand" evidence="7">
    <location>
        <begin position="893"/>
        <end position="898"/>
    </location>
</feature>
<feature type="helix" evidence="7">
    <location>
        <begin position="905"/>
        <end position="907"/>
    </location>
</feature>
<feature type="strand" evidence="7">
    <location>
        <begin position="908"/>
        <end position="920"/>
    </location>
</feature>
<feature type="strand" evidence="7">
    <location>
        <begin position="929"/>
        <end position="943"/>
    </location>
</feature>
<feature type="strand" evidence="7">
    <location>
        <begin position="946"/>
        <end position="948"/>
    </location>
</feature>
<feature type="strand" evidence="7">
    <location>
        <begin position="953"/>
        <end position="959"/>
    </location>
</feature>
<feature type="strand" evidence="8">
    <location>
        <begin position="963"/>
        <end position="965"/>
    </location>
</feature>
<feature type="strand" evidence="7">
    <location>
        <begin position="966"/>
        <end position="971"/>
    </location>
</feature>
<feature type="strand" evidence="7">
    <location>
        <begin position="980"/>
        <end position="986"/>
    </location>
</feature>
<feature type="helix" evidence="7">
    <location>
        <begin position="990"/>
        <end position="996"/>
    </location>
</feature>
<feature type="strand" evidence="7">
    <location>
        <begin position="998"/>
        <end position="1015"/>
    </location>
</feature>
<feature type="helix" evidence="7">
    <location>
        <begin position="1017"/>
        <end position="1019"/>
    </location>
</feature>
<feature type="strand" evidence="7">
    <location>
        <begin position="1023"/>
        <end position="1031"/>
    </location>
</feature>
<feature type="turn" evidence="7">
    <location>
        <begin position="1033"/>
        <end position="1035"/>
    </location>
</feature>
<feature type="strand" evidence="7">
    <location>
        <begin position="1042"/>
        <end position="1045"/>
    </location>
</feature>
<feature type="helix" evidence="7">
    <location>
        <begin position="1046"/>
        <end position="1048"/>
    </location>
</feature>
<feature type="strand" evidence="7">
    <location>
        <begin position="1050"/>
        <end position="1057"/>
    </location>
</feature>
<feature type="strand" evidence="8">
    <location>
        <begin position="1060"/>
        <end position="1062"/>
    </location>
</feature>
<feature type="strand" evidence="7">
    <location>
        <begin position="1064"/>
        <end position="1067"/>
    </location>
</feature>
<feature type="strand" evidence="7">
    <location>
        <begin position="1074"/>
        <end position="1082"/>
    </location>
</feature>
<feature type="helix" evidence="7">
    <location>
        <begin position="1083"/>
        <end position="1085"/>
    </location>
</feature>
<feature type="strand" evidence="7">
    <location>
        <begin position="1086"/>
        <end position="1095"/>
    </location>
</feature>
<feature type="strand" evidence="7">
    <location>
        <begin position="1100"/>
        <end position="1104"/>
    </location>
</feature>
<feature type="strand" evidence="7">
    <location>
        <begin position="1106"/>
        <end position="1109"/>
    </location>
</feature>
<proteinExistence type="evidence at protein level"/>
<reference key="1">
    <citation type="journal article" date="1990" name="J. Gen. Virol.">
        <title>RNA2 of grapevine fanleaf virus: sequence analysis and coat protein cistron location.</title>
        <authorList>
            <person name="Serghini M.A."/>
            <person name="Fuchs M."/>
            <person name="Pinck M."/>
            <person name="Reinbolt J."/>
            <person name="Walter B."/>
            <person name="Pinck L."/>
        </authorList>
    </citation>
    <scope>NUCLEOTIDE SEQUENCE [GENOMIC RNA]</scope>
    <scope>PROTEIN SEQUENCE OF 606-632</scope>
    <scope>PROTEOLYTIC PROCESSING OF POLYPROTEIN</scope>
    <source>
        <strain>F13</strain>
    </source>
</reference>
<reference key="2">
    <citation type="journal article" date="1993" name="J. Gen. Virol.">
        <title>Genome organization of grapevine fanleaf nepovirus RNA2 deduced from the 122K polyprotein P2 in vitro cleavage products.</title>
        <authorList>
            <person name="Margis R."/>
            <person name="Ritzenthaler C."/>
            <person name="Reinbolt J."/>
            <person name="Pinck M."/>
            <person name="Pinck L."/>
        </authorList>
    </citation>
    <scope>NUCLEOTIDE SEQUENCE [GENOMIC RNA]</scope>
    <scope>PROTEIN SEQUENCE OF 258-272</scope>
    <scope>PROTEOLYTIC PROCESSING OF POLYPROTEIN</scope>
    <source>
        <strain>F13</strain>
    </source>
</reference>
<reference key="3">
    <citation type="journal article" date="1999" name="Virology">
        <title>Protein 2A of grapevine fanleaf nepovirus is implicated in RNA2 replication and colocalizes to the replication site.</title>
        <authorList>
            <person name="Gaire F."/>
            <person name="Schmitt C."/>
            <person name="Stussi-Garaud C."/>
            <person name="Pinck L."/>
            <person name="Ritzenthaler C."/>
        </authorList>
    </citation>
    <scope>FUNCTION OF PROTEIN 2A</scope>
    <scope>SUBCELLULAR LOCATION OF PROTEIN 2A</scope>
</reference>
<reference key="4">
    <citation type="journal article" date="2003" name="Plant Cell">
        <title>Involvement of the secretory pathway and the cytoskeleton in intracellular targeting and tubule assembly of Grapevine fanleaf virus movement protein in tobacco BY-2 cells.</title>
        <authorList>
            <person name="Laporte C."/>
            <person name="Vetter G."/>
            <person name="Loudes A.-M."/>
            <person name="Robinson D.G."/>
            <person name="Hillmer S."/>
            <person name="Stussi-Garaud C."/>
            <person name="Ritzenthaler C."/>
        </authorList>
    </citation>
    <scope>FUNCTION OF MOVEMENT PROTEIN</scope>
    <scope>SUBCELLULAR LOCATION OF MOVEMENT PROTEIN</scope>
</reference>
<sequence>MGKFYYSNRRLACWAAGKNPHLGGSVEQWLAAINTDPSFRQTVKEDVQENREQPTAVRMFSWKVGSGPIDNPEKCDWHFVLTGERPAPSRPVKADEVVVVPQPKKVVIPTPPPPPAPYFRAVGAFAPTRSEFVRAIVERLTRLREESRAAALFAELPLEYPQGAPLKLSLAAKFAMLKHTTWRKWYDTSDERLLEAHPGGPCLPPPPPIQNPPSFQERVREFCRMKSCTKAFALETSLGLNKAWVGLVDIPSTSVCCADGKTTGGQTIAQEADPLQHRISTSVAPGRAQWISERRQALRRREQANSFEGLAAQTDMTFEQARNAYLGAADMIEQGLPLLPPLRSAYAPRGLWRGPSTRANYTLDFRLNGIPTGTNTLEILYNPVSEEEMEEYRDRGMSAVVIDALEIAINPFGMPGNPTDLTVVATYGHERDMTRAFIGSASTFLGNGLARAIFFPGLQYSQEEPRRESIIRLYVASTNATVDTDSVLAAISVGTLRQHVGSMHYRTVASTVHQAQVQGTTLRATMMGNTVVVSPEGSLVTGTPEARVEIGGGSSIRMVGPLQWESVEEPGQTFSIRSRSRSVRIDRNVDLPQLEAEPRLSSTVRGLAGRGVIYIPKDCQANRYLGTLNIRDMISDFKGVQYEKWITAGLVMPTFKIVIRLPANAFTGLTWVMSFDAYNRITSRITASADPVYTLSVPHWLIHHKLGTFSCEIDYGELCGHAMWFKSTTFESPRLHFTCLTGNNKELAADWQAVVELYAELEEATSFLGKPTLVFDPGVFNGKFQFLTCPPIFFDLTAVTALRSAGLTLGQVPMVGTTKVYNLNSTLVSCVLGMGGTVRGRVHICAPIFYSIVLWVVSEWNGTTMDWNELFKYPGVYVEEDGSFEVKIRSPYHRTPARLLAGQSQRDMSSLNFYAIAGPIAPSGETAQLPIVVQIDEIVRPDLSLPSFEDDYFVWVDFSEFTLDKEEIEIGSRFFDFTSNTCRVSMGENPFAAMIACHGLHSGVLDLKLQWSLNTEFGKSSGSVTITKLVGDKAMGLDGPSHVFAIQKLEGTTELLVGNFAGANPNTRFSLYSRWMAIKLDQAKSIKVLRVLCKPRPGFSFYGRTSFPV</sequence>
<keyword id="KW-0002">3D-structure</keyword>
<keyword id="KW-0167">Capsid protein</keyword>
<keyword id="KW-0903">Direct protein sequencing</keyword>
<keyword id="KW-1031">Host cell junction</keyword>
<keyword id="KW-1035">Host cytoplasm</keyword>
<keyword id="KW-1048">Host nucleus</keyword>
<keyword id="KW-0813">Transport</keyword>
<keyword id="KW-0916">Viral movement protein</keyword>
<keyword id="KW-0946">Virion</keyword>
<name>POL2_GFLV</name>
<protein>
    <recommendedName>
        <fullName>RNA2 polyprotein</fullName>
    </recommendedName>
    <alternativeName>
        <fullName>P2</fullName>
    </alternativeName>
    <component>
        <recommendedName>
            <fullName>Protein 2A</fullName>
            <shortName>P2A</shortName>
        </recommendedName>
    </component>
    <component>
        <recommendedName>
            <fullName>Movement protein</fullName>
        </recommendedName>
        <alternativeName>
            <fullName>2B-MP</fullName>
        </alternativeName>
    </component>
    <component>
        <recommendedName>
            <fullName>Coat protein</fullName>
        </recommendedName>
        <alternativeName>
            <fullName>2C-CP</fullName>
        </alternativeName>
    </component>
</protein>
<organism>
    <name type="scientific">Grapevine fanleaf virus</name>
    <name type="common">GFLV</name>
    <dbReference type="NCBI Taxonomy" id="12274"/>
    <lineage>
        <taxon>Viruses</taxon>
        <taxon>Riboviria</taxon>
        <taxon>Orthornavirae</taxon>
        <taxon>Pisuviricota</taxon>
        <taxon>Pisoniviricetes</taxon>
        <taxon>Picornavirales</taxon>
        <taxon>Secoviridae</taxon>
        <taxon>Comovirinae</taxon>
        <taxon>Nepovirus</taxon>
        <taxon>Nepovirus foliumflabelli</taxon>
    </lineage>
</organism>